<reference key="1">
    <citation type="journal article" date="2011" name="Genome Biol.">
        <title>Comparative and functional genomics provide insights into the pathogenicity of dermatophytic fungi.</title>
        <authorList>
            <person name="Burmester A."/>
            <person name="Shelest E."/>
            <person name="Gloeckner G."/>
            <person name="Heddergott C."/>
            <person name="Schindler S."/>
            <person name="Staib P."/>
            <person name="Heidel A."/>
            <person name="Felder M."/>
            <person name="Petzold A."/>
            <person name="Szafranski K."/>
            <person name="Feuermann M."/>
            <person name="Pedruzzi I."/>
            <person name="Priebe S."/>
            <person name="Groth M."/>
            <person name="Winkler R."/>
            <person name="Li W."/>
            <person name="Kniemeyer O."/>
            <person name="Schroeckh V."/>
            <person name="Hertweck C."/>
            <person name="Hube B."/>
            <person name="White T.C."/>
            <person name="Platzer M."/>
            <person name="Guthke R."/>
            <person name="Heitman J."/>
            <person name="Woestemeyer J."/>
            <person name="Zipfel P.F."/>
            <person name="Monod M."/>
            <person name="Brakhage A.A."/>
        </authorList>
    </citation>
    <scope>NUCLEOTIDE SEQUENCE [LARGE SCALE GENOMIC DNA]</scope>
    <source>
        <strain>ATCC MYA-4681 / CBS 112371</strain>
    </source>
</reference>
<name>MEP5_ARTBC</name>
<keyword id="KW-0325">Glycoprotein</keyword>
<keyword id="KW-0378">Hydrolase</keyword>
<keyword id="KW-0479">Metal-binding</keyword>
<keyword id="KW-0482">Metalloprotease</keyword>
<keyword id="KW-0645">Protease</keyword>
<keyword id="KW-1185">Reference proteome</keyword>
<keyword id="KW-0964">Secreted</keyword>
<keyword id="KW-0732">Signal</keyword>
<keyword id="KW-0843">Virulence</keyword>
<keyword id="KW-0862">Zinc</keyword>
<keyword id="KW-0865">Zymogen</keyword>
<protein>
    <recommendedName>
        <fullName>Probable extracellular metalloproteinase 5</fullName>
        <ecNumber>3.4.24.-</ecNumber>
    </recommendedName>
    <alternativeName>
        <fullName>Fungalysin MEP5</fullName>
    </alternativeName>
</protein>
<dbReference type="EC" id="3.4.24.-"/>
<dbReference type="EMBL" id="ABSU01000005">
    <property type="protein sequence ID" value="EFE34709.1"/>
    <property type="molecule type" value="Genomic_DNA"/>
</dbReference>
<dbReference type="RefSeq" id="XP_003015349.1">
    <property type="nucleotide sequence ID" value="XM_003015303.1"/>
</dbReference>
<dbReference type="SMR" id="D4AQG5"/>
<dbReference type="MEROPS" id="M36.001"/>
<dbReference type="GlyCosmos" id="D4AQG5">
    <property type="glycosylation" value="3 sites, No reported glycans"/>
</dbReference>
<dbReference type="GeneID" id="9521073"/>
<dbReference type="KEGG" id="abe:ARB_06472"/>
<dbReference type="eggNOG" id="ENOG502QTDC">
    <property type="taxonomic scope" value="Eukaryota"/>
</dbReference>
<dbReference type="HOGENOM" id="CLU_012703_3_0_1"/>
<dbReference type="OMA" id="YSANMVH"/>
<dbReference type="OrthoDB" id="3227768at2759"/>
<dbReference type="Proteomes" id="UP000008866">
    <property type="component" value="Unassembled WGS sequence"/>
</dbReference>
<dbReference type="GO" id="GO:0005576">
    <property type="term" value="C:extracellular region"/>
    <property type="evidence" value="ECO:0007669"/>
    <property type="project" value="UniProtKB-SubCell"/>
</dbReference>
<dbReference type="GO" id="GO:0004222">
    <property type="term" value="F:metalloendopeptidase activity"/>
    <property type="evidence" value="ECO:0007669"/>
    <property type="project" value="InterPro"/>
</dbReference>
<dbReference type="GO" id="GO:0008270">
    <property type="term" value="F:zinc ion binding"/>
    <property type="evidence" value="ECO:0007669"/>
    <property type="project" value="InterPro"/>
</dbReference>
<dbReference type="GO" id="GO:0006508">
    <property type="term" value="P:proteolysis"/>
    <property type="evidence" value="ECO:0007669"/>
    <property type="project" value="UniProtKB-KW"/>
</dbReference>
<dbReference type="CDD" id="cd09596">
    <property type="entry name" value="M36"/>
    <property type="match status" value="1"/>
</dbReference>
<dbReference type="Gene3D" id="3.10.170.10">
    <property type="match status" value="1"/>
</dbReference>
<dbReference type="Gene3D" id="1.10.390.10">
    <property type="entry name" value="Neutral Protease Domain 2"/>
    <property type="match status" value="1"/>
</dbReference>
<dbReference type="InterPro" id="IPR011096">
    <property type="entry name" value="FTP_domain"/>
</dbReference>
<dbReference type="InterPro" id="IPR050371">
    <property type="entry name" value="Fungal_virulence_M36"/>
</dbReference>
<dbReference type="InterPro" id="IPR001842">
    <property type="entry name" value="Peptidase_M36"/>
</dbReference>
<dbReference type="InterPro" id="IPR027268">
    <property type="entry name" value="Peptidase_M4/M1_CTD_sf"/>
</dbReference>
<dbReference type="PANTHER" id="PTHR33478">
    <property type="entry name" value="EXTRACELLULAR METALLOPROTEINASE MEP"/>
    <property type="match status" value="1"/>
</dbReference>
<dbReference type="PANTHER" id="PTHR33478:SF1">
    <property type="entry name" value="EXTRACELLULAR METALLOPROTEINASE MEP"/>
    <property type="match status" value="1"/>
</dbReference>
<dbReference type="Pfam" id="PF07504">
    <property type="entry name" value="FTP"/>
    <property type="match status" value="1"/>
</dbReference>
<dbReference type="Pfam" id="PF02128">
    <property type="entry name" value="Peptidase_M36"/>
    <property type="match status" value="1"/>
</dbReference>
<dbReference type="PRINTS" id="PR00999">
    <property type="entry name" value="FUNGALYSIN"/>
</dbReference>
<dbReference type="SUPFAM" id="SSF55486">
    <property type="entry name" value="Metalloproteases ('zincins'), catalytic domain"/>
    <property type="match status" value="1"/>
</dbReference>
<dbReference type="PROSITE" id="PS00142">
    <property type="entry name" value="ZINC_PROTEASE"/>
    <property type="match status" value="1"/>
</dbReference>
<proteinExistence type="inferred from homology"/>
<evidence type="ECO:0000250" key="1"/>
<evidence type="ECO:0000255" key="2"/>
<evidence type="ECO:0000255" key="3">
    <source>
        <dbReference type="PROSITE-ProRule" id="PRU10095"/>
    </source>
</evidence>
<evidence type="ECO:0000305" key="4"/>
<accession>D4AQG5</accession>
<organism>
    <name type="scientific">Arthroderma benhamiae (strain ATCC MYA-4681 / CBS 112371)</name>
    <name type="common">Trichophyton mentagrophytes</name>
    <dbReference type="NCBI Taxonomy" id="663331"/>
    <lineage>
        <taxon>Eukaryota</taxon>
        <taxon>Fungi</taxon>
        <taxon>Dikarya</taxon>
        <taxon>Ascomycota</taxon>
        <taxon>Pezizomycotina</taxon>
        <taxon>Eurotiomycetes</taxon>
        <taxon>Eurotiomycetidae</taxon>
        <taxon>Onygenales</taxon>
        <taxon>Arthrodermataceae</taxon>
        <taxon>Trichophyton</taxon>
    </lineage>
</organism>
<gene>
    <name type="primary">MEP5</name>
    <name type="ORF">ARB_06472</name>
</gene>
<sequence>MHGLLLAAAGLLSLPLHVLAHPQPSTNLAGRGVDLDAYRMADRSSYMSSDDMKLKQPAIASLSGGNYVDTATEVVKRMMPGMTFRMVDDHYVGESGISHVYFRQTMHGMDIDNADFNVNIGKDGKVLSLGHSFYTGPAPDKAPVEKRDFSDPMQAFHGACKALNLPINADKATIQTMNEHEVMFMGTSGAMSDPQGKLCYMAKEDGTLALTWRVETDMGDNWLLSYVDAKETDKVHNVVDYVSHATYQVYKWPIPDPTEGKREIVQNPWNLKTSPFTWISDGKTNYTTTRGNNAIAQANFDGGEDYLNNYRPDSKNLKFEYPYAPNMSPPKSYIDASVTQLFYSANMVHDLYYMLGFTEKAGNFQVNNRGQGGKGNDFVILNAQDGSGTNNANFATPPDGKPGRMRVYIWTKAKPSRDSSFEAGTVIHEYTHGLSNRLCGGPANAGCLNGMESGGMGEGWGDFFATAIRLKPNDNRNSNYVHGEWVNNSPKGNRLYPYSTNLQTNPLVYTSCNKYNEVHAIGTVWCSILYEVLWNLIDKHGKNDGPTPVFENGVPNDGKYLALKLVLDGMAIQPCKPTFVQARDAIIDADMNLTKGSNKCELWKAFAKRGLGVGAKYDPKNRTGSKAVPKECQ</sequence>
<comment type="function">
    <text evidence="1">Secreted metalloproteinase probably acting as a virulence factor.</text>
</comment>
<comment type="cofactor">
    <cofactor evidence="1">
        <name>Zn(2+)</name>
        <dbReference type="ChEBI" id="CHEBI:29105"/>
    </cofactor>
    <text evidence="1">Binds 1 zinc ion per subunit.</text>
</comment>
<comment type="subcellular location">
    <subcellularLocation>
        <location evidence="1">Secreted</location>
    </subcellularLocation>
</comment>
<comment type="similarity">
    <text evidence="4">Belongs to the peptidase M36 family.</text>
</comment>
<feature type="signal peptide" evidence="2">
    <location>
        <begin position="1"/>
        <end position="20"/>
    </location>
</feature>
<feature type="propeptide" id="PRO_0000397738" evidence="1">
    <location>
        <begin position="21"/>
        <end position="244"/>
    </location>
</feature>
<feature type="chain" id="PRO_0000397739" description="Probable extracellular metalloproteinase 5">
    <location>
        <begin position="245"/>
        <end position="633"/>
    </location>
</feature>
<feature type="active site" evidence="3">
    <location>
        <position position="429"/>
    </location>
</feature>
<feature type="binding site" evidence="3">
    <location>
        <position position="428"/>
    </location>
    <ligand>
        <name>Zn(2+)</name>
        <dbReference type="ChEBI" id="CHEBI:29105"/>
        <note>catalytic</note>
    </ligand>
</feature>
<feature type="binding site" evidence="3">
    <location>
        <position position="432"/>
    </location>
    <ligand>
        <name>Zn(2+)</name>
        <dbReference type="ChEBI" id="CHEBI:29105"/>
        <note>catalytic</note>
    </ligand>
</feature>
<feature type="glycosylation site" description="N-linked (GlcNAc...) asparagine" evidence="2">
    <location>
        <position position="285"/>
    </location>
</feature>
<feature type="glycosylation site" description="N-linked (GlcNAc...) asparagine" evidence="2">
    <location>
        <position position="592"/>
    </location>
</feature>
<feature type="glycosylation site" description="N-linked (GlcNAc...) asparagine" evidence="2">
    <location>
        <position position="621"/>
    </location>
</feature>